<comment type="function">
    <text evidence="1 3">Self-assembles to form an icosahedral capsid with a T=16 symmetry, about 200 nm in diameter, and consisting of 150 hexons and 12 pentons (total of 162 capsomers). Hexons form the edges and faces of the capsid and are each composed of six MCP molecules. In contrast, one penton is found at each of the 12 vertices. Eleven of the pentons are MCP pentamers, while the last vertex is occupied by the portal complex. The capsid is surrounded by a layer of proteinaceous material designated the tegument which, in turn, is enclosed in an envelope of host cell-derived lipids containing virus-encoded glycoproteins.</text>
</comment>
<comment type="subunit">
    <text evidence="1">Homomultimer. Makes the hexons and eleven out of twelve pentons. Interacts with triplex proteins 1/TRX1 and 2/TRX2; adjacent capsomers are linked together in groups of three by triplexes, heterotrimeric complexes composed of one molecule of TRX1 and two molecules of TRX2. Interacts with scaffold protein; this interaction allows efficient MCP transport to the host nucleus. Interacts with capsid vertex component 2/CVC2. Interacts with the small capsomere-interacting protein/SCP.</text>
</comment>
<comment type="subcellular location">
    <subcellularLocation>
        <location evidence="1 2">Virion</location>
    </subcellularLocation>
    <subcellularLocation>
        <location evidence="1">Host nucleus</location>
    </subcellularLocation>
</comment>
<comment type="similarity">
    <text evidence="1">Belongs to the herpesviridae major capsid protein family.</text>
</comment>
<sequence>MASNEGVENRPFPYLTVDADLLSNLRQSAAEGLFHSFDLLVGKDAREAGIKFEVLLGVYTNAIQYVRFLETALAVSCVNTEFKDLSRMTDGKIQFRISVPTIAHGDGRRPSKQRTFIVVKNCHKHHISTEMELSMLDLEILHSIPETPVEYAEYVGAVKTVASALQFGVDALERGLINTVLSVKLRHAPPMFILQTLADPTFTERGFSKTVKSDLIAMFKRHLLEHSFFLDRAENMGSGFSQYVRSRLSEMVAAVSGESVLKGVSTYTTAKGGEPVGGVFIVTDNVLRQLLTFLGEEADNQIMGPSSYASFVVRGENLVTAVSYGRVMRTFEHFMARIVDSPEKAGSTKSDLPAVAAGVEDQPRVPISAAVIKLGNHAVAVESLQKMYNDTQSPYPLNRRMQYSYYFPVGLFMPNPKYTTSAAIKMLDNPTQQLPVEAWIVNKNNLLLAFNLQNALKVLCHPRLHTPAHTLNSLNAAPAPRDRRETYSLQHRRPNHMNVLVIVDEFYDNKYAAPVTDIALKCGLPTEDFLHPSNYDLLRLELHPLYDIYIGRDAGERARHRAVHRLMVGNLPTPLAPAAFQEARGQQFETATSLAHVVDQAVIETVQDTAYDTAYPAFFYVVEAMIHGFEEKFVMNVPLVSLCINTYWERSGRLAFVNSFSMIKFICRHLGNNAISKEAYSMYRKIYGELIALEQALMRLAGSDVVGDESVGQYVCALLDPNLLPPVAYTDIFTHLLTVSDRAPQIIIGNEVYADTLAAPQFIERVGNMDEMAAQFVALYGYRVNGDHDHDFRLHLGPYVDEGHADVLEKIFYYVFLPTCTNAHMCGLGVDFQHVAQTLAYNGPAFSHHFTRDEDILDNLENGTLRDLLEISDLRPTVGMIRDLSASFMTCPTFTRAVRVSVDNDVTQQLAPNPADKRTEQTVLVNGLVAFAFSERTRAVTQCLFHAIPFHMFYGDPRVAATMHQDVATFVMRNPQQRAVEAFNRPEQLFAEYREWHRSPMGKYAAECLPSLVSISGMTAMHIKMSPMAYIAQAKLKIHPGVAMTVVRTDEILSENILFSSRASTSMFIGTPNVSRREARVDAVTFEVHHEMASIDTGLSYSSTMTPARVAAITTDMGIHTQDFFSVFPAEAFGNQQVNDYIKAKVGAQRNGTLLRDPRTYLAGMTNVNGAPGLCHGQQATCEIIVTPVTADVAYFQKSNSPRGRAACVVSCENYNQEVAEGLIYDHSRPDAAYEYRSTVNPWASQLGSLGDIMYNSSYRQTAVPGLYSPCRAFFNKEELLRNNRGLYNMVNEYSQRLGGHPATSNTEVQFVVIAGTDVFLEQPCSFLQEAFPALSASSRALIDEFMSVKQTHAPIHYGHYIIEEVAPVRRILKFGNKVVF</sequence>
<gene>
    <name evidence="1" type="primary">MCP</name>
    <name type="ORF">BcLF1</name>
</gene>
<proteinExistence type="evidence at protein level"/>
<organism>
    <name type="scientific">Epstein-Barr virus (strain B95-8)</name>
    <name type="common">HHV-4</name>
    <name type="synonym">Human herpesvirus 4</name>
    <dbReference type="NCBI Taxonomy" id="10377"/>
    <lineage>
        <taxon>Viruses</taxon>
        <taxon>Duplodnaviria</taxon>
        <taxon>Heunggongvirae</taxon>
        <taxon>Peploviricota</taxon>
        <taxon>Herviviricetes</taxon>
        <taxon>Herpesvirales</taxon>
        <taxon>Orthoherpesviridae</taxon>
        <taxon>Gammaherpesvirinae</taxon>
        <taxon>Lymphocryptovirus</taxon>
        <taxon>Lymphocryptovirus humangamma4</taxon>
        <taxon>Epstein-Barr virus (strain GD1)</taxon>
    </lineage>
</organism>
<protein>
    <recommendedName>
        <fullName evidence="1">Major capsid protein</fullName>
        <shortName evidence="1">MCP</shortName>
    </recommendedName>
</protein>
<accession>P03226</accession>
<accession>Q777C2</accession>
<evidence type="ECO:0000255" key="1">
    <source>
        <dbReference type="HAMAP-Rule" id="MF_04016"/>
    </source>
</evidence>
<evidence type="ECO:0000269" key="2">
    <source>
    </source>
</evidence>
<evidence type="ECO:0000269" key="3">
    <source>
    </source>
</evidence>
<reference key="1">
    <citation type="journal article" date="1984" name="Nature">
        <title>DNA sequence and expression of the B95-8 Epstein-Barr virus genome.</title>
        <authorList>
            <person name="Baer R."/>
            <person name="Bankier A.T."/>
            <person name="Biggin M.D."/>
            <person name="Deininger P.L."/>
            <person name="Farrell P.J."/>
            <person name="Gibson T.J."/>
            <person name="Hatfull G."/>
            <person name="Hudson G.S."/>
            <person name="Satchwell S.C."/>
            <person name="Seguin C."/>
            <person name="Tuffnell P.S."/>
            <person name="Barrell B.G."/>
        </authorList>
    </citation>
    <scope>NUCLEOTIDE SEQUENCE [LARGE SCALE GENOMIC DNA]</scope>
</reference>
<reference key="2">
    <citation type="journal article" date="2003" name="Virology">
        <title>Updated Epstein-Barr virus (EBV) DNA sequence and analysis of a promoter for the BART (CST, BARF0) RNAs of EBV.</title>
        <authorList>
            <person name="de Jesus O."/>
            <person name="Smith P.R."/>
            <person name="Spender L.C."/>
            <person name="Elgueta Karstegl C."/>
            <person name="Niller H.H."/>
            <person name="Huang D."/>
            <person name="Farrell P.J."/>
        </authorList>
    </citation>
    <scope>GENOME REANNOTATION</scope>
</reference>
<reference key="3">
    <citation type="journal article" date="2004" name="Proc. Natl. Acad. Sci. U.S.A.">
        <title>Proteins of purified Epstein-Barr virus.</title>
        <authorList>
            <person name="Johannsen E."/>
            <person name="Luftig M."/>
            <person name="Chase M.R."/>
            <person name="Weicksel S."/>
            <person name="Cahir-McFarland E."/>
            <person name="Illanes D."/>
            <person name="Sarracino D."/>
            <person name="Kieff E."/>
        </authorList>
    </citation>
    <scope>SUBCELLULAR LOCATION</scope>
</reference>
<reference key="4">
    <citation type="journal article" date="2009" name="J. Virol.">
        <title>Self-assembly of Epstein-Barr virus capsids.</title>
        <authorList>
            <person name="Henson B.W."/>
            <person name="Perkins E.M."/>
            <person name="Cothran J.E."/>
            <person name="Desai P."/>
        </authorList>
    </citation>
    <scope>FUNCTION</scope>
</reference>
<name>MCP_EBVB9</name>
<dbReference type="EMBL" id="V01555">
    <property type="protein sequence ID" value="CAA24794.1"/>
    <property type="molecule type" value="Genomic_DNA"/>
</dbReference>
<dbReference type="EMBL" id="AJ507799">
    <property type="protein sequence ID" value="CAD53447.1"/>
    <property type="molecule type" value="Genomic_DNA"/>
</dbReference>
<dbReference type="PIR" id="H43044">
    <property type="entry name" value="QQBE45"/>
</dbReference>
<dbReference type="RefSeq" id="YP_401697.1">
    <property type="nucleotide sequence ID" value="NC_007605.1"/>
</dbReference>
<dbReference type="PDB" id="6W19">
    <property type="method" value="EM"/>
    <property type="resolution" value="5.50 A"/>
    <property type="chains" value="A/B/C/D/E/F/G/H/I/J/K/L/M/N/O/P=1-1381"/>
</dbReference>
<dbReference type="PDB" id="6W2D">
    <property type="method" value="EM"/>
    <property type="resolution" value="4.00 A"/>
    <property type="chains" value="J/K/N/O/P=1-1381"/>
</dbReference>
<dbReference type="PDB" id="6W2E">
    <property type="method" value="EM"/>
    <property type="resolution" value="4.40 A"/>
    <property type="chains" value="J/K/N/O=1-1381"/>
</dbReference>
<dbReference type="PDB" id="7BQX">
    <property type="method" value="EM"/>
    <property type="resolution" value="4.20 A"/>
    <property type="chains" value="S/T/W/x=1-1381"/>
</dbReference>
<dbReference type="PDB" id="7BR7">
    <property type="method" value="EM"/>
    <property type="resolution" value="4.30 A"/>
    <property type="chains" value="S/T/W/l/x=1-1381"/>
</dbReference>
<dbReference type="PDB" id="7BR8">
    <property type="method" value="EM"/>
    <property type="resolution" value="3.80 A"/>
    <property type="chains" value="S/T/W/l/x=1-1381"/>
</dbReference>
<dbReference type="PDB" id="7BSI">
    <property type="method" value="EM"/>
    <property type="resolution" value="4.10 A"/>
    <property type="chains" value="A/B/C/D/E/F/M/N/O/S/T/U/V/k/l/x=1-1381"/>
</dbReference>
<dbReference type="PDBsum" id="6W19"/>
<dbReference type="PDBsum" id="6W2D"/>
<dbReference type="PDBsum" id="6W2E"/>
<dbReference type="PDBsum" id="7BQX"/>
<dbReference type="PDBsum" id="7BR7"/>
<dbReference type="PDBsum" id="7BR8"/>
<dbReference type="PDBsum" id="7BSI"/>
<dbReference type="EMDB" id="EMD-21504"/>
<dbReference type="EMDB" id="EMD-21525"/>
<dbReference type="EMDB" id="EMD-21526"/>
<dbReference type="EMDB" id="EMD-30157"/>
<dbReference type="EMDB" id="EMD-30158"/>
<dbReference type="EMDB" id="EMD-30159"/>
<dbReference type="EMDB" id="EMD-30162"/>
<dbReference type="SMR" id="P03226"/>
<dbReference type="DNASU" id="3783688"/>
<dbReference type="GeneID" id="3783688"/>
<dbReference type="KEGG" id="vg:3783688"/>
<dbReference type="Proteomes" id="UP000153037">
    <property type="component" value="Segment"/>
</dbReference>
<dbReference type="GO" id="GO:0042025">
    <property type="term" value="C:host cell nucleus"/>
    <property type="evidence" value="ECO:0007669"/>
    <property type="project" value="UniProtKB-SubCell"/>
</dbReference>
<dbReference type="GO" id="GO:0039622">
    <property type="term" value="C:T=16 icosahedral viral capsid"/>
    <property type="evidence" value="ECO:0007669"/>
    <property type="project" value="UniProtKB-KW"/>
</dbReference>
<dbReference type="GO" id="GO:0005198">
    <property type="term" value="F:structural molecule activity"/>
    <property type="evidence" value="ECO:0007669"/>
    <property type="project" value="InterPro"/>
</dbReference>
<dbReference type="HAMAP" id="MF_04016">
    <property type="entry name" value="HSV_MCP"/>
    <property type="match status" value="1"/>
</dbReference>
<dbReference type="InterPro" id="IPR000912">
    <property type="entry name" value="Herpes_MCP"/>
</dbReference>
<dbReference type="InterPro" id="IPR023233">
    <property type="entry name" value="Herpes_MCP_upper_sf"/>
</dbReference>
<dbReference type="Pfam" id="PF03122">
    <property type="entry name" value="Herpes_MCP"/>
    <property type="match status" value="1"/>
</dbReference>
<dbReference type="PRINTS" id="PR00235">
    <property type="entry name" value="HSVCAPSIDMCP"/>
</dbReference>
<dbReference type="SUPFAM" id="SSF103417">
    <property type="entry name" value="Major capsid protein VP5"/>
    <property type="match status" value="1"/>
</dbReference>
<organismHost>
    <name type="scientific">Homo sapiens</name>
    <name type="common">Human</name>
    <dbReference type="NCBI Taxonomy" id="9606"/>
</organismHost>
<feature type="chain" id="PRO_0000115710" description="Major capsid protein">
    <location>
        <begin position="1"/>
        <end position="1381"/>
    </location>
</feature>
<keyword id="KW-0002">3D-structure</keyword>
<keyword id="KW-0167">Capsid protein</keyword>
<keyword id="KW-1048">Host nucleus</keyword>
<keyword id="KW-1185">Reference proteome</keyword>
<keyword id="KW-1147">T=16 icosahedral capsid protein</keyword>
<keyword id="KW-0946">Virion</keyword>